<comment type="function">
    <text evidence="1">Required for the formation of a threonylcarbamoyl group on adenosine at position 37 (t(6)A37) in tRNAs that read codons beginning with adenine. Is involved in the transfer of the threonylcarbamoyl moiety of threonylcarbamoyl-AMP (TC-AMP) to the N6 group of A37, together with TsaE and TsaB. TsaD likely plays a direct catalytic role in this reaction.</text>
</comment>
<comment type="catalytic activity">
    <reaction evidence="1">
        <text>L-threonylcarbamoyladenylate + adenosine(37) in tRNA = N(6)-L-threonylcarbamoyladenosine(37) in tRNA + AMP + H(+)</text>
        <dbReference type="Rhea" id="RHEA:37059"/>
        <dbReference type="Rhea" id="RHEA-COMP:10162"/>
        <dbReference type="Rhea" id="RHEA-COMP:10163"/>
        <dbReference type="ChEBI" id="CHEBI:15378"/>
        <dbReference type="ChEBI" id="CHEBI:73682"/>
        <dbReference type="ChEBI" id="CHEBI:74411"/>
        <dbReference type="ChEBI" id="CHEBI:74418"/>
        <dbReference type="ChEBI" id="CHEBI:456215"/>
        <dbReference type="EC" id="2.3.1.234"/>
    </reaction>
</comment>
<comment type="cofactor">
    <cofactor evidence="1">
        <name>Fe(2+)</name>
        <dbReference type="ChEBI" id="CHEBI:29033"/>
    </cofactor>
    <text evidence="1">Binds 1 Fe(2+) ion per subunit.</text>
</comment>
<comment type="subcellular location">
    <subcellularLocation>
        <location evidence="1">Cytoplasm</location>
    </subcellularLocation>
</comment>
<comment type="similarity">
    <text evidence="1">Belongs to the KAE1 / TsaD family.</text>
</comment>
<feature type="chain" id="PRO_1000087472" description="tRNA N6-adenosine threonylcarbamoyltransferase">
    <location>
        <begin position="1"/>
        <end position="326"/>
    </location>
</feature>
<feature type="binding site" evidence="1">
    <location>
        <position position="111"/>
    </location>
    <ligand>
        <name>Fe cation</name>
        <dbReference type="ChEBI" id="CHEBI:24875"/>
    </ligand>
</feature>
<feature type="binding site" evidence="1">
    <location>
        <position position="115"/>
    </location>
    <ligand>
        <name>Fe cation</name>
        <dbReference type="ChEBI" id="CHEBI:24875"/>
    </ligand>
</feature>
<feature type="binding site" evidence="1">
    <location>
        <begin position="134"/>
        <end position="138"/>
    </location>
    <ligand>
        <name>substrate</name>
    </ligand>
</feature>
<feature type="binding site" evidence="1">
    <location>
        <position position="167"/>
    </location>
    <ligand>
        <name>substrate</name>
    </ligand>
</feature>
<feature type="binding site" evidence="1">
    <location>
        <position position="180"/>
    </location>
    <ligand>
        <name>substrate</name>
    </ligand>
</feature>
<feature type="binding site" evidence="1">
    <location>
        <position position="184"/>
    </location>
    <ligand>
        <name>substrate</name>
    </ligand>
</feature>
<feature type="binding site" evidence="1">
    <location>
        <position position="268"/>
    </location>
    <ligand>
        <name>substrate</name>
    </ligand>
</feature>
<feature type="binding site" evidence="1">
    <location>
        <position position="293"/>
    </location>
    <ligand>
        <name>Fe cation</name>
        <dbReference type="ChEBI" id="CHEBI:24875"/>
    </ligand>
</feature>
<evidence type="ECO:0000255" key="1">
    <source>
        <dbReference type="HAMAP-Rule" id="MF_01445"/>
    </source>
</evidence>
<reference key="1">
    <citation type="submission" date="2007-05" db="EMBL/GenBank/DDBJ databases">
        <title>Complete sequence of Dehalococcoides sp. BAV1.</title>
        <authorList>
            <consortium name="US DOE Joint Genome Institute"/>
            <person name="Copeland A."/>
            <person name="Lucas S."/>
            <person name="Lapidus A."/>
            <person name="Barry K."/>
            <person name="Detter J.C."/>
            <person name="Glavina del Rio T."/>
            <person name="Hammon N."/>
            <person name="Israni S."/>
            <person name="Pitluck S."/>
            <person name="Lowry S."/>
            <person name="Clum A."/>
            <person name="Schmutz J."/>
            <person name="Larimer F."/>
            <person name="Land M."/>
            <person name="Hauser L."/>
            <person name="Kyrpides N."/>
            <person name="Kim E."/>
            <person name="Ritalahti K.M."/>
            <person name="Loeffler F."/>
            <person name="Richardson P."/>
        </authorList>
    </citation>
    <scope>NUCLEOTIDE SEQUENCE [LARGE SCALE GENOMIC DNA]</scope>
    <source>
        <strain>ATCC BAA-2100 / JCM 16839 / KCTC 5957 / BAV1</strain>
    </source>
</reference>
<accession>A5FPR2</accession>
<proteinExistence type="inferred from homology"/>
<dbReference type="EC" id="2.3.1.234" evidence="1"/>
<dbReference type="EMBL" id="CP000688">
    <property type="protein sequence ID" value="ABQ17813.1"/>
    <property type="molecule type" value="Genomic_DNA"/>
</dbReference>
<dbReference type="SMR" id="A5FPR2"/>
<dbReference type="KEGG" id="deb:DehaBAV1_1234"/>
<dbReference type="PATRIC" id="fig|216389.18.peg.1303"/>
<dbReference type="HOGENOM" id="CLU_023208_0_2_0"/>
<dbReference type="GO" id="GO:0005737">
    <property type="term" value="C:cytoplasm"/>
    <property type="evidence" value="ECO:0007669"/>
    <property type="project" value="UniProtKB-SubCell"/>
</dbReference>
<dbReference type="GO" id="GO:0005506">
    <property type="term" value="F:iron ion binding"/>
    <property type="evidence" value="ECO:0007669"/>
    <property type="project" value="UniProtKB-UniRule"/>
</dbReference>
<dbReference type="GO" id="GO:0061711">
    <property type="term" value="F:N(6)-L-threonylcarbamoyladenine synthase activity"/>
    <property type="evidence" value="ECO:0007669"/>
    <property type="project" value="UniProtKB-EC"/>
</dbReference>
<dbReference type="GO" id="GO:0002949">
    <property type="term" value="P:tRNA threonylcarbamoyladenosine modification"/>
    <property type="evidence" value="ECO:0007669"/>
    <property type="project" value="UniProtKB-UniRule"/>
</dbReference>
<dbReference type="CDD" id="cd24133">
    <property type="entry name" value="ASKHA_NBD_TsaD_bac"/>
    <property type="match status" value="1"/>
</dbReference>
<dbReference type="FunFam" id="3.30.420.40:FF:000040">
    <property type="entry name" value="tRNA N6-adenosine threonylcarbamoyltransferase"/>
    <property type="match status" value="1"/>
</dbReference>
<dbReference type="Gene3D" id="3.30.420.40">
    <property type="match status" value="2"/>
</dbReference>
<dbReference type="HAMAP" id="MF_01445">
    <property type="entry name" value="TsaD"/>
    <property type="match status" value="1"/>
</dbReference>
<dbReference type="InterPro" id="IPR043129">
    <property type="entry name" value="ATPase_NBD"/>
</dbReference>
<dbReference type="InterPro" id="IPR000905">
    <property type="entry name" value="Gcp-like_dom"/>
</dbReference>
<dbReference type="InterPro" id="IPR017861">
    <property type="entry name" value="KAE1/TsaD"/>
</dbReference>
<dbReference type="InterPro" id="IPR022450">
    <property type="entry name" value="TsaD"/>
</dbReference>
<dbReference type="NCBIfam" id="TIGR00329">
    <property type="entry name" value="gcp_kae1"/>
    <property type="match status" value="1"/>
</dbReference>
<dbReference type="NCBIfam" id="TIGR03723">
    <property type="entry name" value="T6A_TsaD_YgjD"/>
    <property type="match status" value="1"/>
</dbReference>
<dbReference type="PANTHER" id="PTHR11735">
    <property type="entry name" value="TRNA N6-ADENOSINE THREONYLCARBAMOYLTRANSFERASE"/>
    <property type="match status" value="1"/>
</dbReference>
<dbReference type="PANTHER" id="PTHR11735:SF6">
    <property type="entry name" value="TRNA N6-ADENOSINE THREONYLCARBAMOYLTRANSFERASE, MITOCHONDRIAL"/>
    <property type="match status" value="1"/>
</dbReference>
<dbReference type="Pfam" id="PF00814">
    <property type="entry name" value="TsaD"/>
    <property type="match status" value="1"/>
</dbReference>
<dbReference type="PRINTS" id="PR00789">
    <property type="entry name" value="OSIALOPTASE"/>
</dbReference>
<dbReference type="SUPFAM" id="SSF53067">
    <property type="entry name" value="Actin-like ATPase domain"/>
    <property type="match status" value="1"/>
</dbReference>
<name>TSAD_DEHMB</name>
<keyword id="KW-0012">Acyltransferase</keyword>
<keyword id="KW-0963">Cytoplasm</keyword>
<keyword id="KW-0408">Iron</keyword>
<keyword id="KW-0479">Metal-binding</keyword>
<keyword id="KW-0808">Transferase</keyword>
<keyword id="KW-0819">tRNA processing</keyword>
<sequence length="326" mass="34264">MKILGIESSCDETAASVVEDGVNILSNRISSQIDIHSRYGGVVPEVASRQHLLSILPVIKDALEEARTGLDEISAIAITNGPGLAGSLIVGVNAAKAIAAARRIPLVAVNHLHGHIYANWLFGKIPEFPCLCLTVSGGHTDLVLMSGHGQYQLLGRTRDDAAGEAFDKAARILGLSYPGGPAIDRASQDGQAVLDLPRSWIPGSHDFSFSGLKTALLRLVESGEVCSVNDAAASFQKAVVDVLVTKTINCAQEYNVKQILLAGGVAANNLLRKQLSEKSSLPVSIPPMGLCTDNAAVIASCGYFRFISGKQDGLDMDVLPALSVTS</sequence>
<gene>
    <name evidence="1" type="primary">tsaD</name>
    <name type="synonym">gcp</name>
    <name type="ordered locus">DehaBAV1_1234</name>
</gene>
<protein>
    <recommendedName>
        <fullName evidence="1">tRNA N6-adenosine threonylcarbamoyltransferase</fullName>
        <ecNumber evidence="1">2.3.1.234</ecNumber>
    </recommendedName>
    <alternativeName>
        <fullName evidence="1">N6-L-threonylcarbamoyladenine synthase</fullName>
        <shortName evidence="1">t(6)A synthase</shortName>
    </alternativeName>
    <alternativeName>
        <fullName evidence="1">t(6)A37 threonylcarbamoyladenosine biosynthesis protein TsaD</fullName>
    </alternativeName>
    <alternativeName>
        <fullName evidence="1">tRNA threonylcarbamoyladenosine biosynthesis protein TsaD</fullName>
    </alternativeName>
</protein>
<organism>
    <name type="scientific">Dehalococcoides mccartyi (strain ATCC BAA-2100 / JCM 16839 / KCTC 5957 / BAV1)</name>
    <dbReference type="NCBI Taxonomy" id="216389"/>
    <lineage>
        <taxon>Bacteria</taxon>
        <taxon>Bacillati</taxon>
        <taxon>Chloroflexota</taxon>
        <taxon>Dehalococcoidia</taxon>
        <taxon>Dehalococcoidales</taxon>
        <taxon>Dehalococcoidaceae</taxon>
        <taxon>Dehalococcoides</taxon>
    </lineage>
</organism>